<protein>
    <recommendedName>
        <fullName evidence="1">Chromosomal replication initiator protein DnaA</fullName>
    </recommendedName>
</protein>
<gene>
    <name evidence="1" type="primary">dnaA</name>
    <name type="ordered locus">LBL_0004</name>
</gene>
<comment type="function">
    <text evidence="1">Plays an essential role in the initiation and regulation of chromosomal replication. ATP-DnaA binds to the origin of replication (oriC) to initiate formation of the DNA replication initiation complex once per cell cycle. Binds the DnaA box (a 9 base pair repeat at the origin) and separates the double-stranded (ds)DNA. Forms a right-handed helical filament on oriC DNA; dsDNA binds to the exterior of the filament while single-stranded (ss)DNA is stabiized in the filament's interior. The ATP-DnaA-oriC complex binds and stabilizes one strand of the AT-rich DNA unwinding element (DUE), permitting loading of DNA polymerase. After initiation quickly degrades to an ADP-DnaA complex that is not apt for DNA replication. Binds acidic phospholipids.</text>
</comment>
<comment type="subunit">
    <text evidence="1">Oligomerizes as a right-handed, spiral filament on DNA at oriC.</text>
</comment>
<comment type="subcellular location">
    <subcellularLocation>
        <location evidence="1">Cytoplasm</location>
    </subcellularLocation>
</comment>
<comment type="domain">
    <text evidence="1">Domain I is involved in oligomerization and binding regulators, domain II is flexibile and of varying length in different bacteria, domain III forms the AAA+ region, while domain IV binds dsDNA.</text>
</comment>
<comment type="similarity">
    <text evidence="1">Belongs to the DnaA family.</text>
</comment>
<proteinExistence type="inferred from homology"/>
<name>DNAA_LEPBL</name>
<evidence type="ECO:0000255" key="1">
    <source>
        <dbReference type="HAMAP-Rule" id="MF_00377"/>
    </source>
</evidence>
<feature type="chain" id="PRO_1000079954" description="Chromosomal replication initiator protein DnaA">
    <location>
        <begin position="1"/>
        <end position="437"/>
    </location>
</feature>
<feature type="region of interest" description="Domain I, interacts with DnaA modulators" evidence="1">
    <location>
        <begin position="1"/>
        <end position="74"/>
    </location>
</feature>
<feature type="region of interest" description="Domain II" evidence="1">
    <location>
        <begin position="74"/>
        <end position="98"/>
    </location>
</feature>
<feature type="region of interest" description="Domain III, AAA+ region" evidence="1">
    <location>
        <begin position="99"/>
        <end position="315"/>
    </location>
</feature>
<feature type="region of interest" description="Domain IV, binds dsDNA" evidence="1">
    <location>
        <begin position="316"/>
        <end position="437"/>
    </location>
</feature>
<feature type="binding site" evidence="1">
    <location>
        <position position="142"/>
    </location>
    <ligand>
        <name>ATP</name>
        <dbReference type="ChEBI" id="CHEBI:30616"/>
    </ligand>
</feature>
<feature type="binding site" evidence="1">
    <location>
        <position position="144"/>
    </location>
    <ligand>
        <name>ATP</name>
        <dbReference type="ChEBI" id="CHEBI:30616"/>
    </ligand>
</feature>
<feature type="binding site" evidence="1">
    <location>
        <position position="145"/>
    </location>
    <ligand>
        <name>ATP</name>
        <dbReference type="ChEBI" id="CHEBI:30616"/>
    </ligand>
</feature>
<feature type="binding site" evidence="1">
    <location>
        <position position="146"/>
    </location>
    <ligand>
        <name>ATP</name>
        <dbReference type="ChEBI" id="CHEBI:30616"/>
    </ligand>
</feature>
<sequence length="437" mass="50815">MNLAWNKILEEVSKKISPQYYERFIDTLKLETLNSEKCTIIAPSATIKTHVERKYQSIIENAILEACGDKIPVEILIETKATSPLQSFLEKSFDQKDFQFNPDYTFETFIVGDCNRLAYTAAKECVRKPAEINPLYLFGSVGVGKTHLLHAIGSELIKKDPWKTVCYIDISSFMNEFRFALQSRELIESFKIKYQSYNCLLVDDIQLLSTNAEKTQDEFFALFNFLFERKRQIVIASDRPSSELTIHERLKSRFVTGVQADIQYPNKEIRKGIVTSHSKIMDLGLSEDVLEFLADQIEEDTRLLLGALNDIYLYKKSYSLLFLNLDKVKEIVKNRLYRKKNVEFSHDRIIESVAKEFNLDAAEIMGKSRKKELIIPRHICFYLLHNVFNVNKSQVGRLFQTQHTTVIHGLRKTEELLSDNKEIRFLVERISSKYKLQ</sequence>
<organism>
    <name type="scientific">Leptospira borgpetersenii serovar Hardjo-bovis (strain L550)</name>
    <dbReference type="NCBI Taxonomy" id="355276"/>
    <lineage>
        <taxon>Bacteria</taxon>
        <taxon>Pseudomonadati</taxon>
        <taxon>Spirochaetota</taxon>
        <taxon>Spirochaetia</taxon>
        <taxon>Leptospirales</taxon>
        <taxon>Leptospiraceae</taxon>
        <taxon>Leptospira</taxon>
    </lineage>
</organism>
<accession>Q056V2</accession>
<keyword id="KW-0067">ATP-binding</keyword>
<keyword id="KW-0963">Cytoplasm</keyword>
<keyword id="KW-0235">DNA replication</keyword>
<keyword id="KW-0238">DNA-binding</keyword>
<keyword id="KW-0446">Lipid-binding</keyword>
<keyword id="KW-0547">Nucleotide-binding</keyword>
<dbReference type="EMBL" id="CP000348">
    <property type="protein sequence ID" value="ABJ77643.1"/>
    <property type="molecule type" value="Genomic_DNA"/>
</dbReference>
<dbReference type="SMR" id="Q056V2"/>
<dbReference type="KEGG" id="lbl:LBL_0004"/>
<dbReference type="HOGENOM" id="CLU_026910_3_2_12"/>
<dbReference type="GO" id="GO:0005737">
    <property type="term" value="C:cytoplasm"/>
    <property type="evidence" value="ECO:0007669"/>
    <property type="project" value="UniProtKB-SubCell"/>
</dbReference>
<dbReference type="GO" id="GO:0005886">
    <property type="term" value="C:plasma membrane"/>
    <property type="evidence" value="ECO:0007669"/>
    <property type="project" value="TreeGrafter"/>
</dbReference>
<dbReference type="GO" id="GO:0005524">
    <property type="term" value="F:ATP binding"/>
    <property type="evidence" value="ECO:0007669"/>
    <property type="project" value="UniProtKB-UniRule"/>
</dbReference>
<dbReference type="GO" id="GO:0016887">
    <property type="term" value="F:ATP hydrolysis activity"/>
    <property type="evidence" value="ECO:0007669"/>
    <property type="project" value="InterPro"/>
</dbReference>
<dbReference type="GO" id="GO:0003688">
    <property type="term" value="F:DNA replication origin binding"/>
    <property type="evidence" value="ECO:0007669"/>
    <property type="project" value="UniProtKB-UniRule"/>
</dbReference>
<dbReference type="GO" id="GO:0008289">
    <property type="term" value="F:lipid binding"/>
    <property type="evidence" value="ECO:0007669"/>
    <property type="project" value="UniProtKB-KW"/>
</dbReference>
<dbReference type="GO" id="GO:0006270">
    <property type="term" value="P:DNA replication initiation"/>
    <property type="evidence" value="ECO:0007669"/>
    <property type="project" value="UniProtKB-UniRule"/>
</dbReference>
<dbReference type="GO" id="GO:0006275">
    <property type="term" value="P:regulation of DNA replication"/>
    <property type="evidence" value="ECO:0007669"/>
    <property type="project" value="UniProtKB-UniRule"/>
</dbReference>
<dbReference type="CDD" id="cd00009">
    <property type="entry name" value="AAA"/>
    <property type="match status" value="1"/>
</dbReference>
<dbReference type="CDD" id="cd06571">
    <property type="entry name" value="Bac_DnaA_C"/>
    <property type="match status" value="1"/>
</dbReference>
<dbReference type="FunFam" id="3.40.50.300:FF:000668">
    <property type="entry name" value="Chromosomal replication initiator protein DnaA"/>
    <property type="match status" value="1"/>
</dbReference>
<dbReference type="Gene3D" id="1.10.1750.10">
    <property type="match status" value="1"/>
</dbReference>
<dbReference type="Gene3D" id="1.10.8.60">
    <property type="match status" value="1"/>
</dbReference>
<dbReference type="Gene3D" id="3.30.300.180">
    <property type="match status" value="1"/>
</dbReference>
<dbReference type="Gene3D" id="3.40.50.300">
    <property type="entry name" value="P-loop containing nucleotide triphosphate hydrolases"/>
    <property type="match status" value="1"/>
</dbReference>
<dbReference type="HAMAP" id="MF_00377">
    <property type="entry name" value="DnaA_bact"/>
    <property type="match status" value="1"/>
</dbReference>
<dbReference type="InterPro" id="IPR003593">
    <property type="entry name" value="AAA+_ATPase"/>
</dbReference>
<dbReference type="InterPro" id="IPR001957">
    <property type="entry name" value="Chromosome_initiator_DnaA"/>
</dbReference>
<dbReference type="InterPro" id="IPR020591">
    <property type="entry name" value="Chromosome_initiator_DnaA-like"/>
</dbReference>
<dbReference type="InterPro" id="IPR013159">
    <property type="entry name" value="DnaA_C"/>
</dbReference>
<dbReference type="InterPro" id="IPR013317">
    <property type="entry name" value="DnaA_dom"/>
</dbReference>
<dbReference type="InterPro" id="IPR024633">
    <property type="entry name" value="DnaA_N_dom"/>
</dbReference>
<dbReference type="InterPro" id="IPR038454">
    <property type="entry name" value="DnaA_N_sf"/>
</dbReference>
<dbReference type="InterPro" id="IPR027417">
    <property type="entry name" value="P-loop_NTPase"/>
</dbReference>
<dbReference type="InterPro" id="IPR010921">
    <property type="entry name" value="Trp_repressor/repl_initiator"/>
</dbReference>
<dbReference type="NCBIfam" id="TIGR00362">
    <property type="entry name" value="DnaA"/>
    <property type="match status" value="1"/>
</dbReference>
<dbReference type="PANTHER" id="PTHR30050">
    <property type="entry name" value="CHROMOSOMAL REPLICATION INITIATOR PROTEIN DNAA"/>
    <property type="match status" value="1"/>
</dbReference>
<dbReference type="PANTHER" id="PTHR30050:SF2">
    <property type="entry name" value="CHROMOSOMAL REPLICATION INITIATOR PROTEIN DNAA"/>
    <property type="match status" value="1"/>
</dbReference>
<dbReference type="Pfam" id="PF00308">
    <property type="entry name" value="Bac_DnaA"/>
    <property type="match status" value="1"/>
</dbReference>
<dbReference type="Pfam" id="PF08299">
    <property type="entry name" value="Bac_DnaA_C"/>
    <property type="match status" value="1"/>
</dbReference>
<dbReference type="Pfam" id="PF11638">
    <property type="entry name" value="DnaA_N"/>
    <property type="match status" value="1"/>
</dbReference>
<dbReference type="PRINTS" id="PR00051">
    <property type="entry name" value="DNAA"/>
</dbReference>
<dbReference type="SMART" id="SM00382">
    <property type="entry name" value="AAA"/>
    <property type="match status" value="1"/>
</dbReference>
<dbReference type="SMART" id="SM00760">
    <property type="entry name" value="Bac_DnaA_C"/>
    <property type="match status" value="1"/>
</dbReference>
<dbReference type="SUPFAM" id="SSF52540">
    <property type="entry name" value="P-loop containing nucleoside triphosphate hydrolases"/>
    <property type="match status" value="1"/>
</dbReference>
<dbReference type="SUPFAM" id="SSF48295">
    <property type="entry name" value="TrpR-like"/>
    <property type="match status" value="1"/>
</dbReference>
<reference key="1">
    <citation type="journal article" date="2006" name="Proc. Natl. Acad. Sci. U.S.A.">
        <title>Genome reduction in Leptospira borgpetersenii reflects limited transmission potential.</title>
        <authorList>
            <person name="Bulach D.M."/>
            <person name="Zuerner R.L."/>
            <person name="Wilson P."/>
            <person name="Seemann T."/>
            <person name="McGrath A."/>
            <person name="Cullen P.A."/>
            <person name="Davis J."/>
            <person name="Johnson M."/>
            <person name="Kuczek E."/>
            <person name="Alt D.P."/>
            <person name="Peterson-Burch B."/>
            <person name="Coppel R.L."/>
            <person name="Rood J.I."/>
            <person name="Davies J.K."/>
            <person name="Adler B."/>
        </authorList>
    </citation>
    <scope>NUCLEOTIDE SEQUENCE [LARGE SCALE GENOMIC DNA]</scope>
    <source>
        <strain>L550</strain>
    </source>
</reference>